<protein>
    <recommendedName>
        <fullName>U4-theraphotoxin-Hhn1h</fullName>
        <shortName>U4-TRTX-Hhn1h</shortName>
    </recommendedName>
    <alternativeName>
        <fullName>Hainantoxin-II-16</fullName>
        <shortName>HNTX-II-16</shortName>
    </alternativeName>
</protein>
<reference key="1">
    <citation type="journal article" date="2010" name="J. Proteome Res.">
        <title>Molecular diversification of peptide toxins from the tarantula Haplopelma hainanum (Ornithoctonus hainana) venom based on transcriptomic, peptidomic, and genomic analyses.</title>
        <authorList>
            <person name="Tang X."/>
            <person name="Zhang Y."/>
            <person name="Hu W."/>
            <person name="Xu D."/>
            <person name="Tao H."/>
            <person name="Yang X."/>
            <person name="Li Y."/>
            <person name="Jiang L."/>
            <person name="Liang S."/>
        </authorList>
    </citation>
    <scope>NUCLEOTIDE SEQUENCE [LARGE SCALE MRNA]</scope>
    <source>
        <tissue>Venom gland</tissue>
    </source>
</reference>
<keyword id="KW-1015">Disulfide bond</keyword>
<keyword id="KW-0528">Neurotoxin</keyword>
<keyword id="KW-0629">Postsynaptic neurotoxin</keyword>
<keyword id="KW-0964">Secreted</keyword>
<keyword id="KW-0732">Signal</keyword>
<keyword id="KW-0800">Toxin</keyword>
<organism>
    <name type="scientific">Cyriopagopus hainanus</name>
    <name type="common">Chinese bird spider</name>
    <name type="synonym">Haplopelma hainanum</name>
    <dbReference type="NCBI Taxonomy" id="209901"/>
    <lineage>
        <taxon>Eukaryota</taxon>
        <taxon>Metazoa</taxon>
        <taxon>Ecdysozoa</taxon>
        <taxon>Arthropoda</taxon>
        <taxon>Chelicerata</taxon>
        <taxon>Arachnida</taxon>
        <taxon>Araneae</taxon>
        <taxon>Mygalomorphae</taxon>
        <taxon>Theraphosidae</taxon>
        <taxon>Haplopelma</taxon>
    </lineage>
</organism>
<proteinExistence type="evidence at transcript level"/>
<sequence length="85" mass="9383">MKVTLIAILTCAAVLVLHTTAAEELEAESQLMEVGMPDTELAAVDEERLFECSVSCEIEKEGNKDCKKKKCIGGWKCKFNMCVKV</sequence>
<dbReference type="EMBL" id="GU292904">
    <property type="protein sequence ID" value="ADB56720.1"/>
    <property type="molecule type" value="mRNA"/>
</dbReference>
<dbReference type="SMR" id="D2Y227"/>
<dbReference type="ArachnoServer" id="AS001770">
    <property type="toxin name" value="U4-theraphotoxin-Hhn1h"/>
</dbReference>
<dbReference type="GO" id="GO:0005576">
    <property type="term" value="C:extracellular region"/>
    <property type="evidence" value="ECO:0007669"/>
    <property type="project" value="UniProtKB-SubCell"/>
</dbReference>
<dbReference type="GO" id="GO:0035792">
    <property type="term" value="C:host cell postsynaptic membrane"/>
    <property type="evidence" value="ECO:0007669"/>
    <property type="project" value="UniProtKB-KW"/>
</dbReference>
<dbReference type="GO" id="GO:0090729">
    <property type="term" value="F:toxin activity"/>
    <property type="evidence" value="ECO:0007669"/>
    <property type="project" value="UniProtKB-KW"/>
</dbReference>
<dbReference type="InterPro" id="IPR012625">
    <property type="entry name" value="Hwtx-2-like"/>
</dbReference>
<dbReference type="Pfam" id="PF08089">
    <property type="entry name" value="Toxin_20"/>
    <property type="match status" value="1"/>
</dbReference>
<dbReference type="SUPFAM" id="SSF57059">
    <property type="entry name" value="omega toxin-like"/>
    <property type="match status" value="1"/>
</dbReference>
<feature type="signal peptide" evidence="2">
    <location>
        <begin position="1"/>
        <end position="22"/>
    </location>
</feature>
<feature type="propeptide" id="PRO_0000400799" evidence="1">
    <location>
        <begin position="23"/>
        <end position="48"/>
    </location>
</feature>
<feature type="peptide" id="PRO_0000400800" description="U4-theraphotoxin-Hhn1h">
    <location>
        <begin position="49"/>
        <end position="85"/>
    </location>
</feature>
<feature type="disulfide bond" evidence="1">
    <location>
        <begin position="52"/>
        <end position="66"/>
    </location>
</feature>
<feature type="disulfide bond" evidence="1">
    <location>
        <begin position="56"/>
        <end position="77"/>
    </location>
</feature>
<feature type="disulfide bond" evidence="1">
    <location>
        <begin position="71"/>
        <end position="82"/>
    </location>
</feature>
<comment type="function">
    <text evidence="1">Postsynaptic neurotoxin.</text>
</comment>
<comment type="subcellular location">
    <subcellularLocation>
        <location evidence="1">Secreted</location>
    </subcellularLocation>
</comment>
<comment type="tissue specificity">
    <text>Expressed by the venom gland.</text>
</comment>
<comment type="similarity">
    <text evidence="3">Belongs to the neurotoxin 12 (Hwtx-2) family. 02 (Hwtx-2) subfamily.</text>
</comment>
<accession>D2Y227</accession>
<name>H2P01_CYRHA</name>
<evidence type="ECO:0000250" key="1"/>
<evidence type="ECO:0000255" key="2"/>
<evidence type="ECO:0000305" key="3"/>